<evidence type="ECO:0000255" key="1">
    <source>
        <dbReference type="HAMAP-Rule" id="MF_01320"/>
    </source>
</evidence>
<evidence type="ECO:0000256" key="2">
    <source>
        <dbReference type="SAM" id="MobiDB-lite"/>
    </source>
</evidence>
<evidence type="ECO:0000305" key="3"/>
<gene>
    <name evidence="1" type="primary">rplB</name>
    <name type="ordered locus">PSPTO_0629</name>
</gene>
<feature type="chain" id="PRO_0000129601" description="Large ribosomal subunit protein uL2">
    <location>
        <begin position="1"/>
        <end position="274"/>
    </location>
</feature>
<feature type="region of interest" description="Disordered" evidence="2">
    <location>
        <begin position="28"/>
        <end position="54"/>
    </location>
</feature>
<feature type="region of interest" description="Disordered" evidence="2">
    <location>
        <begin position="224"/>
        <end position="274"/>
    </location>
</feature>
<feature type="compositionally biased region" description="Basic and acidic residues" evidence="2">
    <location>
        <begin position="263"/>
        <end position="274"/>
    </location>
</feature>
<name>RL2_PSESM</name>
<comment type="function">
    <text evidence="1">One of the primary rRNA binding proteins. Required for association of the 30S and 50S subunits to form the 70S ribosome, for tRNA binding and peptide bond formation. It has been suggested to have peptidyltransferase activity; this is somewhat controversial. Makes several contacts with the 16S rRNA in the 70S ribosome.</text>
</comment>
<comment type="subunit">
    <text evidence="1">Part of the 50S ribosomal subunit. Forms a bridge to the 30S subunit in the 70S ribosome.</text>
</comment>
<comment type="similarity">
    <text evidence="1">Belongs to the universal ribosomal protein uL2 family.</text>
</comment>
<organism>
    <name type="scientific">Pseudomonas syringae pv. tomato (strain ATCC BAA-871 / DC3000)</name>
    <dbReference type="NCBI Taxonomy" id="223283"/>
    <lineage>
        <taxon>Bacteria</taxon>
        <taxon>Pseudomonadati</taxon>
        <taxon>Pseudomonadota</taxon>
        <taxon>Gammaproteobacteria</taxon>
        <taxon>Pseudomonadales</taxon>
        <taxon>Pseudomonadaceae</taxon>
        <taxon>Pseudomonas</taxon>
    </lineage>
</organism>
<sequence length="274" mass="29737">MAIVKCKPTSPGRRFVVKVVNQELHKGAPHAPLLEKKSKTGGRNNNGRITTRHIGGGHKQHYRLVDFRRNDKDGITATVERIEYDPNRTAHIALLLYADGERRYIIAPKGVSAGDQLIAGALAPIKPGNALQLRNIPVGSTVHGIELKPGKGAQIARSAGASAQLIAREGVYVTLRLRSGEMRKVLSECRATLGEVSNSEHSLRSLGKAGAKRWRGVRPTVRGVAMNPVDHPHGGGEGRTSGGRHPVSPWGFPTKGAKTRGNKRTDKMIVRRRK</sequence>
<reference key="1">
    <citation type="journal article" date="2003" name="Proc. Natl. Acad. Sci. U.S.A.">
        <title>The complete genome sequence of the Arabidopsis and tomato pathogen Pseudomonas syringae pv. tomato DC3000.</title>
        <authorList>
            <person name="Buell C.R."/>
            <person name="Joardar V."/>
            <person name="Lindeberg M."/>
            <person name="Selengut J."/>
            <person name="Paulsen I.T."/>
            <person name="Gwinn M.L."/>
            <person name="Dodson R.J."/>
            <person name="DeBoy R.T."/>
            <person name="Durkin A.S."/>
            <person name="Kolonay J.F."/>
            <person name="Madupu R."/>
            <person name="Daugherty S.C."/>
            <person name="Brinkac L.M."/>
            <person name="Beanan M.J."/>
            <person name="Haft D.H."/>
            <person name="Nelson W.C."/>
            <person name="Davidsen T.M."/>
            <person name="Zafar N."/>
            <person name="Zhou L."/>
            <person name="Liu J."/>
            <person name="Yuan Q."/>
            <person name="Khouri H.M."/>
            <person name="Fedorova N.B."/>
            <person name="Tran B."/>
            <person name="Russell D."/>
            <person name="Berry K.J."/>
            <person name="Utterback T.R."/>
            <person name="Van Aken S.E."/>
            <person name="Feldblyum T.V."/>
            <person name="D'Ascenzo M."/>
            <person name="Deng W.-L."/>
            <person name="Ramos A.R."/>
            <person name="Alfano J.R."/>
            <person name="Cartinhour S."/>
            <person name="Chatterjee A.K."/>
            <person name="Delaney T.P."/>
            <person name="Lazarowitz S.G."/>
            <person name="Martin G.B."/>
            <person name="Schneider D.J."/>
            <person name="Tang X."/>
            <person name="Bender C.L."/>
            <person name="White O."/>
            <person name="Fraser C.M."/>
            <person name="Collmer A."/>
        </authorList>
    </citation>
    <scope>NUCLEOTIDE SEQUENCE [LARGE SCALE GENOMIC DNA]</scope>
    <source>
        <strain>ATCC BAA-871 / DC3000</strain>
    </source>
</reference>
<accession>Q889W8</accession>
<protein>
    <recommendedName>
        <fullName evidence="1">Large ribosomal subunit protein uL2</fullName>
    </recommendedName>
    <alternativeName>
        <fullName evidence="3">50S ribosomal protein L2</fullName>
    </alternativeName>
</protein>
<dbReference type="EMBL" id="AE016853">
    <property type="protein sequence ID" value="AAO54171.1"/>
    <property type="molecule type" value="Genomic_DNA"/>
</dbReference>
<dbReference type="RefSeq" id="NP_790476.1">
    <property type="nucleotide sequence ID" value="NC_004578.1"/>
</dbReference>
<dbReference type="RefSeq" id="WP_004397049.1">
    <property type="nucleotide sequence ID" value="NC_004578.1"/>
</dbReference>
<dbReference type="SMR" id="Q889W8"/>
<dbReference type="STRING" id="223283.PSPTO_0629"/>
<dbReference type="GeneID" id="61790273"/>
<dbReference type="KEGG" id="pst:PSPTO_0629"/>
<dbReference type="PATRIC" id="fig|223283.9.peg.635"/>
<dbReference type="eggNOG" id="COG0090">
    <property type="taxonomic scope" value="Bacteria"/>
</dbReference>
<dbReference type="HOGENOM" id="CLU_036235_2_1_6"/>
<dbReference type="OrthoDB" id="9778722at2"/>
<dbReference type="PhylomeDB" id="Q889W8"/>
<dbReference type="Proteomes" id="UP000002515">
    <property type="component" value="Chromosome"/>
</dbReference>
<dbReference type="GO" id="GO:0015934">
    <property type="term" value="C:large ribosomal subunit"/>
    <property type="evidence" value="ECO:0007669"/>
    <property type="project" value="InterPro"/>
</dbReference>
<dbReference type="GO" id="GO:0019843">
    <property type="term" value="F:rRNA binding"/>
    <property type="evidence" value="ECO:0007669"/>
    <property type="project" value="UniProtKB-UniRule"/>
</dbReference>
<dbReference type="GO" id="GO:0003735">
    <property type="term" value="F:structural constituent of ribosome"/>
    <property type="evidence" value="ECO:0007669"/>
    <property type="project" value="InterPro"/>
</dbReference>
<dbReference type="GO" id="GO:0016740">
    <property type="term" value="F:transferase activity"/>
    <property type="evidence" value="ECO:0007669"/>
    <property type="project" value="InterPro"/>
</dbReference>
<dbReference type="GO" id="GO:0002181">
    <property type="term" value="P:cytoplasmic translation"/>
    <property type="evidence" value="ECO:0007669"/>
    <property type="project" value="TreeGrafter"/>
</dbReference>
<dbReference type="FunFam" id="2.30.30.30:FF:000001">
    <property type="entry name" value="50S ribosomal protein L2"/>
    <property type="match status" value="1"/>
</dbReference>
<dbReference type="FunFam" id="2.40.50.140:FF:000003">
    <property type="entry name" value="50S ribosomal protein L2"/>
    <property type="match status" value="1"/>
</dbReference>
<dbReference type="FunFam" id="4.10.950.10:FF:000001">
    <property type="entry name" value="50S ribosomal protein L2"/>
    <property type="match status" value="1"/>
</dbReference>
<dbReference type="Gene3D" id="2.30.30.30">
    <property type="match status" value="1"/>
</dbReference>
<dbReference type="Gene3D" id="2.40.50.140">
    <property type="entry name" value="Nucleic acid-binding proteins"/>
    <property type="match status" value="1"/>
</dbReference>
<dbReference type="Gene3D" id="4.10.950.10">
    <property type="entry name" value="Ribosomal protein L2, domain 3"/>
    <property type="match status" value="1"/>
</dbReference>
<dbReference type="HAMAP" id="MF_01320_B">
    <property type="entry name" value="Ribosomal_uL2_B"/>
    <property type="match status" value="1"/>
</dbReference>
<dbReference type="InterPro" id="IPR012340">
    <property type="entry name" value="NA-bd_OB-fold"/>
</dbReference>
<dbReference type="InterPro" id="IPR014722">
    <property type="entry name" value="Rib_uL2_dom2"/>
</dbReference>
<dbReference type="InterPro" id="IPR002171">
    <property type="entry name" value="Ribosomal_uL2"/>
</dbReference>
<dbReference type="InterPro" id="IPR005880">
    <property type="entry name" value="Ribosomal_uL2_bac/org-type"/>
</dbReference>
<dbReference type="InterPro" id="IPR022669">
    <property type="entry name" value="Ribosomal_uL2_C"/>
</dbReference>
<dbReference type="InterPro" id="IPR022671">
    <property type="entry name" value="Ribosomal_uL2_CS"/>
</dbReference>
<dbReference type="InterPro" id="IPR014726">
    <property type="entry name" value="Ribosomal_uL2_dom3"/>
</dbReference>
<dbReference type="InterPro" id="IPR022666">
    <property type="entry name" value="Ribosomal_uL2_RNA-bd_dom"/>
</dbReference>
<dbReference type="InterPro" id="IPR008991">
    <property type="entry name" value="Translation_prot_SH3-like_sf"/>
</dbReference>
<dbReference type="NCBIfam" id="TIGR01171">
    <property type="entry name" value="rplB_bact"/>
    <property type="match status" value="1"/>
</dbReference>
<dbReference type="PANTHER" id="PTHR13691:SF5">
    <property type="entry name" value="LARGE RIBOSOMAL SUBUNIT PROTEIN UL2M"/>
    <property type="match status" value="1"/>
</dbReference>
<dbReference type="PANTHER" id="PTHR13691">
    <property type="entry name" value="RIBOSOMAL PROTEIN L2"/>
    <property type="match status" value="1"/>
</dbReference>
<dbReference type="Pfam" id="PF00181">
    <property type="entry name" value="Ribosomal_L2"/>
    <property type="match status" value="1"/>
</dbReference>
<dbReference type="Pfam" id="PF03947">
    <property type="entry name" value="Ribosomal_L2_C"/>
    <property type="match status" value="1"/>
</dbReference>
<dbReference type="PIRSF" id="PIRSF002158">
    <property type="entry name" value="Ribosomal_L2"/>
    <property type="match status" value="1"/>
</dbReference>
<dbReference type="SMART" id="SM01383">
    <property type="entry name" value="Ribosomal_L2"/>
    <property type="match status" value="1"/>
</dbReference>
<dbReference type="SMART" id="SM01382">
    <property type="entry name" value="Ribosomal_L2_C"/>
    <property type="match status" value="1"/>
</dbReference>
<dbReference type="SUPFAM" id="SSF50249">
    <property type="entry name" value="Nucleic acid-binding proteins"/>
    <property type="match status" value="1"/>
</dbReference>
<dbReference type="SUPFAM" id="SSF50104">
    <property type="entry name" value="Translation proteins SH3-like domain"/>
    <property type="match status" value="1"/>
</dbReference>
<dbReference type="PROSITE" id="PS00467">
    <property type="entry name" value="RIBOSOMAL_L2"/>
    <property type="match status" value="1"/>
</dbReference>
<proteinExistence type="inferred from homology"/>
<keyword id="KW-1185">Reference proteome</keyword>
<keyword id="KW-0687">Ribonucleoprotein</keyword>
<keyword id="KW-0689">Ribosomal protein</keyword>
<keyword id="KW-0694">RNA-binding</keyword>
<keyword id="KW-0699">rRNA-binding</keyword>